<evidence type="ECO:0000255" key="1">
    <source>
        <dbReference type="HAMAP-Rule" id="MF_00127"/>
    </source>
</evidence>
<comment type="catalytic activity">
    <reaction evidence="1">
        <text>tRNA(His) + L-histidine + ATP = L-histidyl-tRNA(His) + AMP + diphosphate + H(+)</text>
        <dbReference type="Rhea" id="RHEA:17313"/>
        <dbReference type="Rhea" id="RHEA-COMP:9665"/>
        <dbReference type="Rhea" id="RHEA-COMP:9689"/>
        <dbReference type="ChEBI" id="CHEBI:15378"/>
        <dbReference type="ChEBI" id="CHEBI:30616"/>
        <dbReference type="ChEBI" id="CHEBI:33019"/>
        <dbReference type="ChEBI" id="CHEBI:57595"/>
        <dbReference type="ChEBI" id="CHEBI:78442"/>
        <dbReference type="ChEBI" id="CHEBI:78527"/>
        <dbReference type="ChEBI" id="CHEBI:456215"/>
        <dbReference type="EC" id="6.1.1.21"/>
    </reaction>
</comment>
<comment type="subunit">
    <text evidence="1">Homodimer.</text>
</comment>
<comment type="subcellular location">
    <subcellularLocation>
        <location evidence="1">Cytoplasm</location>
    </subcellularLocation>
</comment>
<comment type="similarity">
    <text evidence="1">Belongs to the class-II aminoacyl-tRNA synthetase family.</text>
</comment>
<keyword id="KW-0030">Aminoacyl-tRNA synthetase</keyword>
<keyword id="KW-0067">ATP-binding</keyword>
<keyword id="KW-0963">Cytoplasm</keyword>
<keyword id="KW-0436">Ligase</keyword>
<keyword id="KW-0547">Nucleotide-binding</keyword>
<keyword id="KW-0648">Protein biosynthesis</keyword>
<organism>
    <name type="scientific">Cupriavidus taiwanensis (strain DSM 17343 / BCRC 17206 / CCUG 44338 / CIP 107171 / LMG 19424 / R1)</name>
    <name type="common">Ralstonia taiwanensis (strain LMG 19424)</name>
    <dbReference type="NCBI Taxonomy" id="977880"/>
    <lineage>
        <taxon>Bacteria</taxon>
        <taxon>Pseudomonadati</taxon>
        <taxon>Pseudomonadota</taxon>
        <taxon>Betaproteobacteria</taxon>
        <taxon>Burkholderiales</taxon>
        <taxon>Burkholderiaceae</taxon>
        <taxon>Cupriavidus</taxon>
    </lineage>
</organism>
<proteinExistence type="inferred from homology"/>
<sequence length="456" mass="49965">MTQTETMAAAGAAKTEPKVRPAKALQGVKGMNDMLPADAPLWEHFENAARAMLRAYGYQQIRTPIVEHTQLFVRGIGEVTDIVEKEMYSFTDSLNGEQLTLRPEGTAAAVRATIEHNLLYDGPKRLWYTGPMFRHERPQRGRYRQFHQLGAEALGFAGPDVDAEIILMCQRLWDDLGLTGVRLEINSLGQADERAAHREQLIKYLEGFQDILDDDSKRRLYTNPLRVLDTKNPALQDMAANAPKLIDFLGEESLAHFEGVQRLLKANNIPFKINPRLVRGLDYYNLTVFEWITDKLGAQGTIAGGGRYDPLIAQMGGKPAPACGWAMGIERIIELIREEGVVPDAVGCDVYLVHQGEAAAQQAMVAAERLRDAGLDVVLHASPDGKGGSFKSQMKRADASGAAYAVIIGDDEVAAGVVQVKELRQREQAEGGGQQATVPADGLVDYLIDAMVGASE</sequence>
<feature type="chain" id="PRO_1000095546" description="Histidine--tRNA ligase">
    <location>
        <begin position="1"/>
        <end position="456"/>
    </location>
</feature>
<protein>
    <recommendedName>
        <fullName evidence="1">Histidine--tRNA ligase</fullName>
        <ecNumber evidence="1">6.1.1.21</ecNumber>
    </recommendedName>
    <alternativeName>
        <fullName evidence="1">Histidyl-tRNA synthetase</fullName>
        <shortName evidence="1">HisRS</shortName>
    </alternativeName>
</protein>
<accession>B3R1K1</accession>
<dbReference type="EC" id="6.1.1.21" evidence="1"/>
<dbReference type="EMBL" id="CU633749">
    <property type="protein sequence ID" value="CAQ69849.1"/>
    <property type="molecule type" value="Genomic_DNA"/>
</dbReference>
<dbReference type="RefSeq" id="WP_012353162.1">
    <property type="nucleotide sequence ID" value="NC_010528.1"/>
</dbReference>
<dbReference type="SMR" id="B3R1K1"/>
<dbReference type="GeneID" id="29762689"/>
<dbReference type="KEGG" id="cti:RALTA_A1908"/>
<dbReference type="eggNOG" id="COG0124">
    <property type="taxonomic scope" value="Bacteria"/>
</dbReference>
<dbReference type="HOGENOM" id="CLU_025113_1_1_4"/>
<dbReference type="BioCyc" id="CTAI977880:RALTA_RS09200-MONOMER"/>
<dbReference type="Proteomes" id="UP000001692">
    <property type="component" value="Chromosome 1"/>
</dbReference>
<dbReference type="GO" id="GO:0005737">
    <property type="term" value="C:cytoplasm"/>
    <property type="evidence" value="ECO:0007669"/>
    <property type="project" value="UniProtKB-SubCell"/>
</dbReference>
<dbReference type="GO" id="GO:0005524">
    <property type="term" value="F:ATP binding"/>
    <property type="evidence" value="ECO:0007669"/>
    <property type="project" value="UniProtKB-UniRule"/>
</dbReference>
<dbReference type="GO" id="GO:0004821">
    <property type="term" value="F:histidine-tRNA ligase activity"/>
    <property type="evidence" value="ECO:0007669"/>
    <property type="project" value="UniProtKB-UniRule"/>
</dbReference>
<dbReference type="GO" id="GO:0006427">
    <property type="term" value="P:histidyl-tRNA aminoacylation"/>
    <property type="evidence" value="ECO:0007669"/>
    <property type="project" value="UniProtKB-UniRule"/>
</dbReference>
<dbReference type="CDD" id="cd00773">
    <property type="entry name" value="HisRS-like_core"/>
    <property type="match status" value="1"/>
</dbReference>
<dbReference type="CDD" id="cd00859">
    <property type="entry name" value="HisRS_anticodon"/>
    <property type="match status" value="1"/>
</dbReference>
<dbReference type="FunFam" id="3.30.930.10:FF:000005">
    <property type="entry name" value="Histidine--tRNA ligase"/>
    <property type="match status" value="1"/>
</dbReference>
<dbReference type="Gene3D" id="3.40.50.800">
    <property type="entry name" value="Anticodon-binding domain"/>
    <property type="match status" value="1"/>
</dbReference>
<dbReference type="Gene3D" id="3.30.930.10">
    <property type="entry name" value="Bira Bifunctional Protein, Domain 2"/>
    <property type="match status" value="1"/>
</dbReference>
<dbReference type="HAMAP" id="MF_00127">
    <property type="entry name" value="His_tRNA_synth"/>
    <property type="match status" value="1"/>
</dbReference>
<dbReference type="InterPro" id="IPR006195">
    <property type="entry name" value="aa-tRNA-synth_II"/>
</dbReference>
<dbReference type="InterPro" id="IPR045864">
    <property type="entry name" value="aa-tRNA-synth_II/BPL/LPL"/>
</dbReference>
<dbReference type="InterPro" id="IPR004154">
    <property type="entry name" value="Anticodon-bd"/>
</dbReference>
<dbReference type="InterPro" id="IPR036621">
    <property type="entry name" value="Anticodon-bd_dom_sf"/>
</dbReference>
<dbReference type="InterPro" id="IPR015807">
    <property type="entry name" value="His-tRNA-ligase"/>
</dbReference>
<dbReference type="InterPro" id="IPR041715">
    <property type="entry name" value="HisRS-like_core"/>
</dbReference>
<dbReference type="InterPro" id="IPR004516">
    <property type="entry name" value="HisRS/HisZ"/>
</dbReference>
<dbReference type="InterPro" id="IPR033656">
    <property type="entry name" value="HisRS_anticodon"/>
</dbReference>
<dbReference type="NCBIfam" id="TIGR00442">
    <property type="entry name" value="hisS"/>
    <property type="match status" value="1"/>
</dbReference>
<dbReference type="PANTHER" id="PTHR43707:SF1">
    <property type="entry name" value="HISTIDINE--TRNA LIGASE, MITOCHONDRIAL-RELATED"/>
    <property type="match status" value="1"/>
</dbReference>
<dbReference type="PANTHER" id="PTHR43707">
    <property type="entry name" value="HISTIDYL-TRNA SYNTHETASE"/>
    <property type="match status" value="1"/>
</dbReference>
<dbReference type="Pfam" id="PF03129">
    <property type="entry name" value="HGTP_anticodon"/>
    <property type="match status" value="1"/>
</dbReference>
<dbReference type="Pfam" id="PF13393">
    <property type="entry name" value="tRNA-synt_His"/>
    <property type="match status" value="1"/>
</dbReference>
<dbReference type="PIRSF" id="PIRSF001549">
    <property type="entry name" value="His-tRNA_synth"/>
    <property type="match status" value="1"/>
</dbReference>
<dbReference type="SUPFAM" id="SSF52954">
    <property type="entry name" value="Class II aaRS ABD-related"/>
    <property type="match status" value="1"/>
</dbReference>
<dbReference type="SUPFAM" id="SSF55681">
    <property type="entry name" value="Class II aaRS and biotin synthetases"/>
    <property type="match status" value="1"/>
</dbReference>
<dbReference type="PROSITE" id="PS50862">
    <property type="entry name" value="AA_TRNA_LIGASE_II"/>
    <property type="match status" value="1"/>
</dbReference>
<gene>
    <name evidence="1" type="primary">hisS</name>
    <name type="ordered locus">RALTA_A1908</name>
</gene>
<name>SYH_CUPTR</name>
<reference key="1">
    <citation type="journal article" date="2008" name="Genome Res.">
        <title>Genome sequence of the beta-rhizobium Cupriavidus taiwanensis and comparative genomics of rhizobia.</title>
        <authorList>
            <person name="Amadou C."/>
            <person name="Pascal G."/>
            <person name="Mangenot S."/>
            <person name="Glew M."/>
            <person name="Bontemps C."/>
            <person name="Capela D."/>
            <person name="Carrere S."/>
            <person name="Cruveiller S."/>
            <person name="Dossat C."/>
            <person name="Lajus A."/>
            <person name="Marchetti M."/>
            <person name="Poinsot V."/>
            <person name="Rouy Z."/>
            <person name="Servin B."/>
            <person name="Saad M."/>
            <person name="Schenowitz C."/>
            <person name="Barbe V."/>
            <person name="Batut J."/>
            <person name="Medigue C."/>
            <person name="Masson-Boivin C."/>
        </authorList>
    </citation>
    <scope>NUCLEOTIDE SEQUENCE [LARGE SCALE GENOMIC DNA]</scope>
    <source>
        <strain>DSM 17343 / BCRC 17206 / CCUG 44338 / CIP 107171 / LMG 19424 / R1</strain>
    </source>
</reference>